<proteinExistence type="evidence at protein level"/>
<sequence length="5193" mass="569660">MHYLALSPGFLCYTIKTLILAYLASVLVLAASQGVFPRLENVGAFRKVSTVPTHATCGFPGPSTFCRSPVAAEHVQLCTERLCIQDCPYRSASPLYTALLEGLRSCIPADDGDLHPYSRSSSVSFMFGSHQNCPSLRAPRLAAELTLAVWLKLEQGGTMCVIEKTVDGQIVFKVTISEKETMFYYRTVNGLQPPIKVMTPGRILMKKWIHLTVQVHQTAISFFVDGLEENSTAFDTRTLHDSVTDSVSSVIQVGQSLNGSEQFVGRMQDFRLYNVSLTNREILEVFSGDFPHLHIQPHCRCPGSHPRVHPSVQQYCIPNGAGDTPEHRMSRLNPEAHPLSFINDDDVATSWISHVFTNITQLYEGVAISIDLENGQYQVLKVITQFSSLQPVAIRIQRKKADSSPWEDWQYFARNCSVWGMKDNEDLENPNSVNCLQLPDFIPFSHGNVTFDLLTSGQKHRPGYNDFYNSSVLQEFMRATQIRLHFHGQYYPAGHTVDWRHQYYAVDEIIVSGRCQCHGHAETCDRTRRPYRCLCSPHSFTEGPQCDRCSPLYNDKPFRSGDNVNAFNCKPCQCHGHASSCHYDASVDPFPLEHNRGGGGVCDDCQHHTTGRHCESCQDYFYRPVGADPAAPDACKLCDCNRAGTRNGSLHCDPIGGQCDCKRRVSGRQCLQCQDGFYDLQALDPDGCRPCNCNPSGTVDGDITCHQNSGQCSCKANVIGLRCNRCNFGFKFLQSFNGDGCEPCQCNLHGSVNQLCDPLSGQCACKKEAKGLKCDSCRENFYGLPWSACEVCDCSKAGSQPGTVCDTETGQCVCKPNVGGRQCSQCKAGYFNLYQNDSHLCLTCNCEKMGTVNGSLRCDKSTGQCPCKLGVTGLRCHQCKPHRFNLTMDNPQGCQACDCDSLGTLPGSMCDPISGQCLCLPHRQGRRCEQCQPGFYSSPSNATGCLPCLCHTAGAVSHICNSVTGQCSCHDPSTTGRSCHQCQESYFRFDPLTGRCRPCHCHVAGASNGTCDAVTGQCFCKEFVTGSKCDTCVPGASHLDVNNLLGCSKTPSQQPPPRGWVQSSSTINVSWSPPECPNAHWLTYTLFRNGSEIYTTEDEHPYYTQYFLDTSLSPHTAYSYYIETSNVHSSTRSIPVIYETKPEVSEGHLNLTHIIPVGSDSITLTWTGLSNSSDPVAKYVLSCTPVDSTEPCVSYEGPETSATIWNLVPFTQYCFSVQGCTNESCFYSLPIIVTTAQAPPQTQGPPTVWKISPTELRIEWSPPVDSNGIIISYELYMRRWLSTEESLVFESHGLVSSHSALQSVNPSKNLLQQPQASTFISGLEPHTEYAFRVLAVNMAGRVSSAWASERTGESVPVFMAPPSVSPLSPHSLSVSWEKPAENFTRGEIIGYKISMVSEHFPLHDVPVMCSKMVHFAKSQDQSYIVRGLEPYRTYSFTVSLCDSVGCVTSALGSGQTLAAAPAQLRPPMVTGVNSTTVHIRWLPPAGVNGPPPLYHLERKKSSLPAATAAVTKGTRFVGHGYCRFPRTAHADFIGIKASFRTRVPEGLILLALSPGDQEEYFTLQLKNGRPYFLYNSQGTLVEVTPTDDPSQGYRDGEWHEIIAVRHQAFGQITLDGQYTGSSSSLNGSSVTGGYTGLFVGGVPQGHSVLQKRLEIIQRGFVGCLKDVFIMKGYSPSGTWLPLDWQSSEEQVNVHPSWEGCPTNLEEGVQFLGAGFLELPSDTFHAAKDFEISLKFQTDQLNGLLLFIHNTEGPDFLAVELKRGLLSFKFNSSLVFTRVDLRLGLADCDGKWNTVSIKKEGSVVSVRVNALKKSTSQAGGQPLLVNSPVYLGGIPRELQDAYRHLTLEPGFRGCVKEVAFARGVVVNLASVSSRAVRVNQDGCLSSDSTVNCGGNDSILVYRGSQQSVYESGLQPFTEYLYRVTASHEGGAVSSDWSRGRTLGTAPQSVPTPSRAQSINGSSVEVAWNEPAVVKGVLEKYVLKAYSEDSSQPRVPSASTELHDTSTHSGVLIGLHPFHSYTVTLTACSRAGCTESSQALSISTPQEAPQEVQAPVAVALPNSLSFFWSLPRQANGIITQYSLYVDGRLVYTGKGQNYTVTDLRVFAAYEIIVGACTQAGCTNSSQVILHTAQLPPEQVDPPGLTVLDSRTIHVRWKQPRQLNGILERYILYILNPIHNSTMWSVVYNSTEKLQAHVLHHLSPGGLYLIRLRVCTGGGCTTSEPSQALMEETIPEGVPAPRAHSYSPDSFNISWTEPEYPNGVITTYELYLDDTLIHNSSGLSCHAYGFDPGSLHTFQVQACTAKGCALGPLVGNRTLEAPPEGVVNVLVKPEGSREAHVRWDAPAHPNGRLTYSVHFTGSFYADQAGDNYTLLSGTKTIRGIEGSRLWVLVDGLVPCSHYMVQVNASNSRGSVLSDPVSVEMPPGAPDGLLSPRLAAAAPTSLQVVWSTPARNNAPGSPRYQLQMRPGPSTHGRLELFPIPSASLSYEVTGLQPFTVYEFRLVATNGFGTAYSAWTPLMTTEDKPGPIDAPILINVKARMLSVIWRQPAKCNGAITHYNIYLHGRLYLTVSGRVTNYTVVPLHPYKAYHFQVEACTSQGCSKSPSSETVWTLPGNPEGIPSPQLFPYTPTSIIVTWQPSAHLDLLVENVTIERRVKGKKEVRNLVTLARSQAMKFIDNDPALRPWTRYEYRVLGSTLDGGTNSSAWVEVTTRPCRPSGVQPPTVRVLAPDTVEVSWKAPLMQNGDILSYEIRMPEPLIKMTNMSSIMLSHLVKHLIPFTNYSVTIVACSGGNGYLAGCTESPPTLATTHPAPPQELAPLSVILLSESDVGISWQPPSKPNGPNLRYELLRCKIQQPLASNPPEDLNLWHNIYSGTRWFYKDKGLSRFTTYEYKLFVHNSVGFTPSREVTVTTLAGSPERGATVTASILNHTAIDVRWKKPTFQDLQGDVEYYTLFWSSGTSEESLKIFPDVDFHVIGQLSPNVEYQVFLLVFNGVHAINSTVVHVTMWEEEPQGMLPPEVVIINSTAVRVIWTSPSNPNAVVTESSVYVNNKLYKTGTDAPGSFVLEDLSPFTIYDIQVEVCTKDACVKSNGTQVSTAEDTPSDISIPVIRGITSRSLQIDWTTPANPNGIILGYDVLRKTWRPCSETQKLTDKPRDELCKAVKCQYPGKVCGHTCYSPGTKVCCDGLLYDPQPGYSCCEDKYIALSPNATGVCCGGRMWEAQPDHQCCSGHYARILPGEICCPDERHNRVSVGFGDACCGTMPYATSGSQVCCAGRLQDGYRQQCCGGEMVSQDFQCCGGGEEGMVYSYLPGMLCCGQDYVNMSETICCSASSGESKAHVRKDDPTPVKCCGTELSPESQRCCDGVGYNPLKYVCSDEISAGMAMKETRVCATICPATMKATAHCGRCDFNATTHICTVMRGPLNPTGKKAVEGLCSAAEEIVHSGDVNTHSFIDRDLKPSTVYEYRISAWNSYGRGFSQSVRASTREDVPEGVKAPRWARTGKHEDVIFLQWEEPMQSNGPIIHYILFRDGRERFQGTALSFTDTQGIQPLQEYSYQLKACTAAGCAVSCKVVAATTQRSPENVPPPNITAQSSETLHLSWSVPEKMKDAIKAYQLWLDGKGLIYTDTSDRRQHTVTGLQPYTNYSFTLAVCTSVGCTSSEPCVGQTLQAAPQGVWVTPRHIIINSTTVELYWNPPERPNGLISQYQLRRNGSLLLVGGRDNQSFTDSNLEPGSRYIYKLEARTGGGSSWSEDYLVQMPLWTPEDIHPPCNVTVLGSDSIFVAWPTPGNLLPKIPVEYSILLSGGSVTLLVFSVRHRQSAHLKNLSPFTQYEIRIQACQNGGCGVSPGTYVRTLEAAPVGLMPPLLKALGSSCIEVKWMPPTRPNGIITSYVVHRRPADTEEESLLFVWSEGALEFTDDTGTLRPFTLYEYRVRAWNSQGAVDSPWSTIQTLEAPPRGLPAPRVQATSAHSAMLNWTEPEAPNGLISQYHVIYQERPDAAAPGSSTVHAFTVTGTSRQAHLFGLEPFTTYHIGVVAVNSAGKVSSPWTLIKTLESAPSGLMNFTVEQREKGRALLLQWSEPVKTNGVIKAYNIFNDGVLEYSGLGRQFLFRRLAPFTLYTLILEACTTAGCAHSVPQPLWTEEAPPDTQMAPTIQSVGPTNVRLHWSQPASPNGKIIHYEVIRRRSEEEDWGNTTWQADGNTVFTEYNTQGNAWVYNDTGLQPWRQYAYRICAWNSAGHTCSSWNVVRTLQAPPDGLSPPEISYVSMSPLQLLISWLPPRHSNGVIQGYRLQRDGVLPALNFNASTFSYMDSQLLPFSTYSYAILACTGGGCCTSEPTNITTPEVPPSEVSPPVLWDISAHQMNVSWSPPSIPNGKIVKYLLQCDGEEHLAGQGLSFLLSNLQPSTQYNISLVACTSGGCTASRTTSAWTKEAPPENMDPPTLHITGPESIEITWTPPRNPHGLIRSYELRRDGAIVYVGLETRYHDFTLAPGVEYSYSVTATNSRGSVLSPLVKGQTSPSAPSGLQPPKLHSGDALELLADWDPPVRTNGKIINYTLFVREMFEGKTRAMSINTTHSSFGTRSLTVKHLKPFHRYEVRVQACTALGCTSSEWTSTQTSEVPPLRQPAPHLEVQTATGGFQPIVAVWWAGPLQPNGKIICFELYRRQVAAWPGTSSSLLIYNGSFRSFMDSELLPFTEYEYQVWAVNSAGKAASNWTRCRTGPAPPEGLQAPTFHTVSSTRAVVNISVPSRPNGNISLFRVFSNSSGTHVTLSEGTATQQTLHDLSPFTTYTIGVEACTCFNCCSRGPTAELRTHPAPPSGLSPPQVQTLGSRMASVHWTPPLLPNGVIHSYELQLQRACPPDSAPRCPPSHTERKYWGPGHRASLAGLQPNTAYGVQVVAYNEAGSTASGWTNFSTKKEMPQYQALFSVDSNASMVWVDWSGTFLLNGHLKEYVVTDGGRRVYSGLDTTLYIPRMVDKIFFFQVTCTTDIGSVKTPLVQYDAATGSGLVLTTPGEKKGAGTKSTEFYSELWFIMVMAVVGLILLAIFLSLILQRKIHKEPCIRERPPLVPLQKRMTPLSVYPPGETHVGLADTRLPRSGTPMSIRSSQSVSVLRIPSQSQLSHAYSQSSLHRSVSQLMDMADKKVVTEDSLWETIMGHSSGLYVDEEELMNAIKGFSSVTKEHTAFTDTHL</sequence>
<feature type="signal peptide" evidence="3">
    <location>
        <begin position="1"/>
        <end position="34"/>
    </location>
</feature>
<feature type="chain" id="PRO_0000229805" description="Usherin">
    <location>
        <begin position="35"/>
        <end position="5193"/>
    </location>
</feature>
<feature type="topological domain" description="Extracellular" evidence="3">
    <location>
        <begin position="35"/>
        <end position="5033"/>
    </location>
</feature>
<feature type="transmembrane region" description="Helical" evidence="3">
    <location>
        <begin position="5034"/>
        <end position="5054"/>
    </location>
</feature>
<feature type="topological domain" description="Cytoplasmic" evidence="3">
    <location>
        <begin position="5055"/>
        <end position="5193"/>
    </location>
</feature>
<feature type="domain" description="Laminin N-terminal" evidence="7">
    <location>
        <begin position="268"/>
        <end position="514"/>
    </location>
</feature>
<feature type="domain" description="Laminin EGF-like 1" evidence="6">
    <location>
        <begin position="515"/>
        <end position="571"/>
    </location>
</feature>
<feature type="domain" description="Laminin EGF-like 2" evidence="6">
    <location>
        <begin position="572"/>
        <end position="637"/>
    </location>
</feature>
<feature type="domain" description="Laminin EGF-like 3" evidence="6">
    <location>
        <begin position="638"/>
        <end position="690"/>
    </location>
</feature>
<feature type="domain" description="Laminin EGF-like 4" evidence="6">
    <location>
        <begin position="691"/>
        <end position="743"/>
    </location>
</feature>
<feature type="domain" description="Laminin EGF-like 5" evidence="6">
    <location>
        <begin position="744"/>
        <end position="791"/>
    </location>
</feature>
<feature type="domain" description="Laminin EGF-like 6" evidence="6">
    <location>
        <begin position="792"/>
        <end position="848"/>
    </location>
</feature>
<feature type="domain" description="Laminin EGF-like 7" evidence="6">
    <location>
        <begin position="853"/>
        <end position="896"/>
    </location>
</feature>
<feature type="domain" description="Laminin EGF-like 8" evidence="6">
    <location>
        <begin position="897"/>
        <end position="947"/>
    </location>
</feature>
<feature type="domain" description="Laminin EGF-like 9" evidence="6">
    <location>
        <begin position="948"/>
        <end position="998"/>
    </location>
</feature>
<feature type="domain" description="Laminin EGF-like 10" evidence="6">
    <location>
        <begin position="999"/>
        <end position="1049"/>
    </location>
</feature>
<feature type="domain" description="Fibronectin type-III 1" evidence="5">
    <location>
        <begin position="1055"/>
        <end position="1143"/>
    </location>
</feature>
<feature type="domain" description="Fibronectin type-III 2" evidence="5">
    <location>
        <begin position="1147"/>
        <end position="1241"/>
    </location>
</feature>
<feature type="domain" description="Fibronectin type-III 3" evidence="5">
    <location>
        <begin position="1242"/>
        <end position="1357"/>
    </location>
</feature>
<feature type="domain" description="Fibronectin type-III 4" evidence="5">
    <location>
        <begin position="1358"/>
        <end position="1462"/>
    </location>
</feature>
<feature type="domain" description="Fibronectin type-III 5" evidence="5">
    <location>
        <begin position="1463"/>
        <end position="1566"/>
    </location>
</feature>
<feature type="domain" description="Laminin G-like 1" evidence="4">
    <location>
        <begin position="1511"/>
        <end position="1700"/>
    </location>
</feature>
<feature type="domain" description="Laminin G-like 2" evidence="4">
    <location>
        <begin position="1705"/>
        <end position="1882"/>
    </location>
</feature>
<feature type="domain" description="Fibronectin type-III 6" evidence="5">
    <location>
        <begin position="1847"/>
        <end position="1946"/>
    </location>
</feature>
<feature type="domain" description="Fibronectin type-III 7" evidence="5">
    <location>
        <begin position="1948"/>
        <end position="2045"/>
    </location>
</feature>
<feature type="domain" description="Fibronectin type-III 8" evidence="5">
    <location>
        <begin position="2046"/>
        <end position="2132"/>
    </location>
</feature>
<feature type="domain" description="Fibronectin type-III 9" evidence="5">
    <location>
        <begin position="2133"/>
        <end position="2234"/>
    </location>
</feature>
<feature type="domain" description="Fibronectin type-III 10" evidence="5">
    <location>
        <begin position="2235"/>
        <end position="2321"/>
    </location>
</feature>
<feature type="domain" description="Fibronectin type-III 11" evidence="5">
    <location>
        <begin position="2322"/>
        <end position="2421"/>
    </location>
</feature>
<feature type="domain" description="Fibronectin type-III 12" evidence="5">
    <location>
        <begin position="2422"/>
        <end position="2525"/>
    </location>
</feature>
<feature type="domain" description="Fibronectin type-III 13" evidence="5">
    <location>
        <begin position="2526"/>
        <end position="2613"/>
    </location>
</feature>
<feature type="domain" description="Fibronectin type-III 14" evidence="5">
    <location>
        <begin position="2617"/>
        <end position="2713"/>
    </location>
</feature>
<feature type="domain" description="Fibronectin type-III 15" evidence="5">
    <location>
        <begin position="2717"/>
        <end position="2810"/>
    </location>
</feature>
<feature type="domain" description="Fibronectin type-III 16" evidence="5">
    <location>
        <begin position="2811"/>
        <end position="2914"/>
    </location>
</feature>
<feature type="domain" description="Fibronectin type-III 17" evidence="5">
    <location>
        <begin position="2918"/>
        <end position="3009"/>
    </location>
</feature>
<feature type="domain" description="Fibronectin type-III 18" evidence="5">
    <location>
        <begin position="3013"/>
        <end position="3103"/>
    </location>
</feature>
<feature type="domain" description="Fibronectin type-III 20" evidence="5">
    <location>
        <begin position="3395"/>
        <end position="3489"/>
    </location>
</feature>
<feature type="domain" description="Fibronectin type-III 21" evidence="5">
    <location>
        <begin position="3490"/>
        <end position="3580"/>
    </location>
</feature>
<feature type="domain" description="Fibronectin type-III 22" evidence="5">
    <location>
        <begin position="3581"/>
        <end position="3671"/>
    </location>
</feature>
<feature type="domain" description="Fibronectin type-III 23" evidence="5">
    <location>
        <begin position="3672"/>
        <end position="3766"/>
    </location>
</feature>
<feature type="domain" description="Fibronectin type-III 24" evidence="5">
    <location>
        <begin position="3769"/>
        <end position="3857"/>
    </location>
</feature>
<feature type="domain" description="Fibronectin type-III 25" evidence="5">
    <location>
        <begin position="3858"/>
        <end position="3955"/>
    </location>
</feature>
<feature type="domain" description="Fibronectin type-III 26" evidence="5">
    <location>
        <begin position="3956"/>
        <end position="4059"/>
    </location>
</feature>
<feature type="domain" description="Fibronectin type-III 27" evidence="5">
    <location>
        <begin position="4060"/>
        <end position="4148"/>
    </location>
</feature>
<feature type="domain" description="Fibronectin type-III 28" evidence="5">
    <location>
        <begin position="4149"/>
        <end position="4256"/>
    </location>
</feature>
<feature type="domain" description="Fibronectin type-III 29" evidence="5">
    <location>
        <begin position="4257"/>
        <end position="4346"/>
    </location>
</feature>
<feature type="domain" description="Fibronectin type-III 30" evidence="5">
    <location>
        <begin position="4347"/>
        <end position="4437"/>
    </location>
</feature>
<feature type="domain" description="Fibronectin type-III 31" evidence="5">
    <location>
        <begin position="4438"/>
        <end position="4522"/>
    </location>
</feature>
<feature type="domain" description="Fibronectin type-III 32" evidence="5">
    <location>
        <begin position="4523"/>
        <end position="4625"/>
    </location>
</feature>
<feature type="domain" description="Fibronectin type-III 33" evidence="5">
    <location>
        <begin position="4628"/>
        <end position="4725"/>
    </location>
</feature>
<feature type="domain" description="Fibronectin type-III 34" evidence="5">
    <location>
        <begin position="4726"/>
        <end position="4818"/>
    </location>
</feature>
<feature type="domain" description="Fibronectin type-III 35" evidence="5">
    <location>
        <begin position="4819"/>
        <end position="4921"/>
    </location>
</feature>
<feature type="domain" description="Fibronectin type-III 36" evidence="5">
    <location>
        <begin position="4922"/>
        <end position="5005"/>
    </location>
</feature>
<feature type="region of interest" description="Disordered" evidence="8">
    <location>
        <begin position="1931"/>
        <end position="1955"/>
    </location>
</feature>
<feature type="short sequence motif" description="PDZ-binding">
    <location>
        <begin position="5191"/>
        <end position="5193"/>
    </location>
</feature>
<feature type="compositionally biased region" description="Polar residues" evidence="8">
    <location>
        <begin position="1943"/>
        <end position="1955"/>
    </location>
</feature>
<feature type="glycosylation site" description="N-linked (GlcNAc...) asparagine" evidence="3">
    <location>
        <position position="230"/>
    </location>
</feature>
<feature type="glycosylation site" description="N-linked (GlcNAc...) asparagine" evidence="3">
    <location>
        <position position="258"/>
    </location>
</feature>
<feature type="glycosylation site" description="N-linked (GlcNAc...) asparagine" evidence="3">
    <location>
        <position position="274"/>
    </location>
</feature>
<feature type="glycosylation site" description="N-linked (GlcNAc...) asparagine" evidence="3">
    <location>
        <position position="358"/>
    </location>
</feature>
<feature type="glycosylation site" description="N-linked (GlcNAc...) asparagine" evidence="3">
    <location>
        <position position="415"/>
    </location>
</feature>
<feature type="glycosylation site" description="N-linked (GlcNAc...) asparagine" evidence="3">
    <location>
        <position position="448"/>
    </location>
</feature>
<feature type="glycosylation site" description="N-linked (GlcNAc...) asparagine" evidence="3">
    <location>
        <position position="469"/>
    </location>
</feature>
<feature type="glycosylation site" description="N-linked (GlcNAc...) asparagine" evidence="3">
    <location>
        <position position="647"/>
    </location>
</feature>
<feature type="glycosylation site" description="N-linked (GlcNAc...) asparagine" evidence="3">
    <location>
        <position position="836"/>
    </location>
</feature>
<feature type="glycosylation site" description="N-linked (GlcNAc...) asparagine" evidence="3">
    <location>
        <position position="853"/>
    </location>
</feature>
<feature type="glycosylation site" description="N-linked (GlcNAc...) asparagine" evidence="3">
    <location>
        <position position="885"/>
    </location>
</feature>
<feature type="glycosylation site" description="N-linked (GlcNAc...) asparagine" evidence="3">
    <location>
        <position position="941"/>
    </location>
</feature>
<feature type="glycosylation site" description="N-linked (GlcNAc...) asparagine" evidence="3">
    <location>
        <position position="1008"/>
    </location>
</feature>
<feature type="glycosylation site" description="N-linked (GlcNAc...) asparagine" evidence="3">
    <location>
        <position position="1068"/>
    </location>
</feature>
<feature type="glycosylation site" description="N-linked (GlcNAc...) asparagine" evidence="3">
    <location>
        <position position="1089"/>
    </location>
</feature>
<feature type="glycosylation site" description="N-linked (GlcNAc...) asparagine" evidence="3">
    <location>
        <position position="1150"/>
    </location>
</feature>
<feature type="glycosylation site" description="N-linked (GlcNAc...) asparagine" evidence="3">
    <location>
        <position position="1171"/>
    </location>
</feature>
<feature type="glycosylation site" description="N-linked (GlcNAc...) asparagine" evidence="3">
    <location>
        <position position="1222"/>
    </location>
</feature>
<feature type="glycosylation site" description="N-linked (GlcNAc...) asparagine" evidence="3">
    <location>
        <position position="1382"/>
    </location>
</feature>
<feature type="glycosylation site" description="N-linked (GlcNAc...) asparagine" evidence="3">
    <location>
        <position position="1473"/>
    </location>
</feature>
<feature type="glycosylation site" description="N-linked (GlcNAc...) asparagine" evidence="3">
    <location>
        <position position="1626"/>
    </location>
</feature>
<feature type="glycosylation site" description="N-linked (GlcNAc...) asparagine" evidence="3">
    <location>
        <position position="1770"/>
    </location>
</feature>
<feature type="glycosylation site" description="N-linked (GlcNAc...) asparagine" evidence="3">
    <location>
        <position position="1894"/>
    </location>
</feature>
<feature type="glycosylation site" description="N-linked (GlcNAc...) asparagine" evidence="3">
    <location>
        <position position="1958"/>
    </location>
</feature>
<feature type="glycosylation site" description="N-linked (GlcNAc...) asparagine" evidence="3">
    <location>
        <position position="2095"/>
    </location>
</feature>
<feature type="glycosylation site" description="N-linked (GlcNAc...) asparagine" evidence="3">
    <location>
        <position position="2121"/>
    </location>
</feature>
<feature type="glycosylation site" description="N-linked (GlcNAc...) asparagine" evidence="3">
    <location>
        <position position="2177"/>
    </location>
</feature>
<feature type="glycosylation site" description="N-linked (GlcNAc...) asparagine" evidence="3">
    <location>
        <position position="2186"/>
    </location>
</feature>
<feature type="glycosylation site" description="N-linked (GlcNAc...) asparagine" evidence="3">
    <location>
        <position position="2249"/>
    </location>
</feature>
<feature type="glycosylation site" description="N-linked (GlcNAc...) asparagine" evidence="3">
    <location>
        <position position="2276"/>
    </location>
</feature>
<feature type="glycosylation site" description="N-linked (GlcNAc...) asparagine" evidence="3">
    <location>
        <position position="2313"/>
    </location>
</feature>
<feature type="glycosylation site" description="N-linked (GlcNAc...) asparagine" evidence="3">
    <location>
        <position position="2368"/>
    </location>
</feature>
<feature type="glycosylation site" description="N-linked (GlcNAc...) asparagine" evidence="3">
    <location>
        <position position="2404"/>
    </location>
</feature>
<feature type="glycosylation site" description="N-linked (GlcNAc...) asparagine" evidence="3">
    <location>
        <position position="2575"/>
    </location>
</feature>
<feature type="glycosylation site" description="N-linked (GlcNAc...) asparagine" evidence="3">
    <location>
        <position position="2647"/>
    </location>
</feature>
<feature type="glycosylation site" description="N-linked (GlcNAc...) asparagine" evidence="3">
    <location>
        <position position="2701"/>
    </location>
</feature>
<feature type="glycosylation site" description="N-linked (GlcNAc...) asparagine" evidence="3">
    <location>
        <position position="2761"/>
    </location>
</feature>
<feature type="glycosylation site" description="N-linked (GlcNAc...) asparagine" evidence="3">
    <location>
        <position position="2779"/>
    </location>
</feature>
<feature type="glycosylation site" description="N-linked (GlcNAc...) asparagine" evidence="3">
    <location>
        <position position="2928"/>
    </location>
</feature>
<feature type="glycosylation site" description="N-linked (GlcNAc...) asparagine" evidence="3">
    <location>
        <position position="2998"/>
    </location>
</feature>
<feature type="glycosylation site" description="N-linked (GlcNAc...) asparagine" evidence="3">
    <location>
        <position position="3023"/>
    </location>
</feature>
<feature type="glycosylation site" description="N-linked (GlcNAc...) asparagine" evidence="3">
    <location>
        <position position="3090"/>
    </location>
</feature>
<feature type="glycosylation site" description="N-linked (GlcNAc...) asparagine" evidence="3">
    <location>
        <position position="3208"/>
    </location>
</feature>
<feature type="glycosylation site" description="N-linked (GlcNAc...) asparagine" evidence="3">
    <location>
        <position position="3322"/>
    </location>
</feature>
<feature type="glycosylation site" description="N-linked (GlcNAc...) asparagine" evidence="3">
    <location>
        <position position="3411"/>
    </location>
</feature>
<feature type="glycosylation site" description="N-linked (GlcNAc...) asparagine" evidence="3">
    <location>
        <position position="3589"/>
    </location>
</feature>
<feature type="glycosylation site" description="N-linked (GlcNAc...) asparagine" evidence="3">
    <location>
        <position position="3645"/>
    </location>
</feature>
<feature type="glycosylation site" description="N-linked (GlcNAc...) asparagine" evidence="3">
    <location>
        <position position="3686"/>
    </location>
</feature>
<feature type="glycosylation site" description="N-linked (GlcNAc...) asparagine" evidence="3">
    <location>
        <position position="3712"/>
    </location>
</feature>
<feature type="glycosylation site" description="N-linked (GlcNAc...) asparagine" evidence="3">
    <location>
        <position position="3723"/>
    </location>
</feature>
<feature type="glycosylation site" description="N-linked (GlcNAc...) asparagine" evidence="3">
    <location>
        <position position="3772"/>
    </location>
</feature>
<feature type="glycosylation site" description="N-linked (GlcNAc...) asparagine" evidence="3">
    <location>
        <position position="3976"/>
    </location>
</feature>
<feature type="glycosylation site" description="N-linked (GlcNAc...) asparagine" evidence="3">
    <location>
        <position position="4063"/>
    </location>
</feature>
<feature type="glycosylation site" description="N-linked (GlcNAc...) asparagine" evidence="3">
    <location>
        <position position="4194"/>
    </location>
</feature>
<feature type="glycosylation site" description="N-linked (GlcNAc...) asparagine" evidence="3">
    <location>
        <position position="4218"/>
    </location>
</feature>
<feature type="glycosylation site" description="N-linked (GlcNAc...) asparagine" evidence="3">
    <location>
        <position position="4304"/>
    </location>
</feature>
<feature type="glycosylation site" description="N-linked (GlcNAc...) asparagine" evidence="3">
    <location>
        <position position="4340"/>
    </location>
</feature>
<feature type="glycosylation site" description="N-linked (GlcNAc...) asparagine" evidence="3">
    <location>
        <position position="4365"/>
    </location>
</feature>
<feature type="glycosylation site" description="N-linked (GlcNAc...) asparagine" evidence="3">
    <location>
        <position position="4410"/>
    </location>
</feature>
<feature type="glycosylation site" description="N-linked (GlcNAc...) asparagine" evidence="3">
    <location>
        <position position="4556"/>
    </location>
</feature>
<feature type="glycosylation site" description="N-linked (GlcNAc...) asparagine" evidence="3">
    <location>
        <position position="4575"/>
    </location>
</feature>
<feature type="glycosylation site" description="N-linked (GlcNAc...) asparagine" evidence="3">
    <location>
        <position position="4683"/>
    </location>
</feature>
<feature type="glycosylation site" description="N-linked (GlcNAc...) asparagine" evidence="3">
    <location>
        <position position="4716"/>
    </location>
</feature>
<feature type="glycosylation site" description="N-linked (GlcNAc...) asparagine" evidence="3">
    <location>
        <position position="4746"/>
    </location>
</feature>
<feature type="glycosylation site" description="N-linked (GlcNAc...) asparagine" evidence="3">
    <location>
        <position position="4756"/>
    </location>
</feature>
<feature type="glycosylation site" description="N-linked (GlcNAc...) asparagine" evidence="3">
    <location>
        <position position="4765"/>
    </location>
</feature>
<feature type="glycosylation site" description="N-linked (GlcNAc...) asparagine" evidence="3">
    <location>
        <position position="4915"/>
    </location>
</feature>
<feature type="glycosylation site" description="N-linked (GlcNAc...) asparagine" evidence="3">
    <location>
        <position position="4934"/>
    </location>
</feature>
<feature type="disulfide bond" evidence="1">
    <location>
        <begin position="515"/>
        <end position="524"/>
    </location>
</feature>
<feature type="disulfide bond" evidence="1">
    <location>
        <begin position="517"/>
        <end position="533"/>
    </location>
</feature>
<feature type="disulfide bond" evidence="1">
    <location>
        <begin position="535"/>
        <end position="546"/>
    </location>
</feature>
<feature type="disulfide bond" evidence="1">
    <location>
        <begin position="549"/>
        <end position="569"/>
    </location>
</feature>
<feature type="disulfide bond" evidence="1">
    <location>
        <begin position="572"/>
        <end position="581"/>
    </location>
</feature>
<feature type="disulfide bond" evidence="1">
    <location>
        <begin position="574"/>
        <end position="602"/>
    </location>
</feature>
<feature type="disulfide bond" evidence="1">
    <location>
        <begin position="605"/>
        <end position="614"/>
    </location>
</feature>
<feature type="disulfide bond" evidence="1">
    <location>
        <begin position="617"/>
        <end position="635"/>
    </location>
</feature>
<feature type="disulfide bond" evidence="1">
    <location>
        <begin position="638"/>
        <end position="652"/>
    </location>
</feature>
<feature type="disulfide bond" evidence="1">
    <location>
        <begin position="640"/>
        <end position="659"/>
    </location>
</feature>
<feature type="disulfide bond" evidence="1">
    <location>
        <begin position="661"/>
        <end position="670"/>
    </location>
</feature>
<feature type="disulfide bond" evidence="1">
    <location>
        <begin position="673"/>
        <end position="688"/>
    </location>
</feature>
<feature type="disulfide bond" evidence="1">
    <location>
        <begin position="691"/>
        <end position="705"/>
    </location>
</feature>
<feature type="disulfide bond" evidence="1">
    <location>
        <begin position="693"/>
        <end position="712"/>
    </location>
</feature>
<feature type="disulfide bond" evidence="1">
    <location>
        <begin position="714"/>
        <end position="723"/>
    </location>
</feature>
<feature type="disulfide bond" evidence="1">
    <location>
        <begin position="726"/>
        <end position="741"/>
    </location>
</feature>
<feature type="disulfide bond" evidence="1">
    <location>
        <begin position="744"/>
        <end position="756"/>
    </location>
</feature>
<feature type="disulfide bond" evidence="1">
    <location>
        <begin position="746"/>
        <end position="763"/>
    </location>
</feature>
<feature type="disulfide bond" evidence="1">
    <location>
        <begin position="765"/>
        <end position="774"/>
    </location>
</feature>
<feature type="disulfide bond" evidence="1">
    <location>
        <begin position="777"/>
        <end position="789"/>
    </location>
</feature>
<feature type="disulfide bond" evidence="1">
    <location>
        <begin position="792"/>
        <end position="805"/>
    </location>
</feature>
<feature type="disulfide bond" evidence="1">
    <location>
        <begin position="794"/>
        <end position="812"/>
    </location>
</feature>
<feature type="disulfide bond" evidence="1">
    <location>
        <begin position="814"/>
        <end position="823"/>
    </location>
</feature>
<feature type="disulfide bond" evidence="1">
    <location>
        <begin position="826"/>
        <end position="846"/>
    </location>
</feature>
<feature type="disulfide bond" evidence="1">
    <location>
        <begin position="867"/>
        <end position="876"/>
    </location>
</feature>
<feature type="disulfide bond" evidence="1">
    <location>
        <begin position="879"/>
        <end position="894"/>
    </location>
</feature>
<feature type="disulfide bond" evidence="1">
    <location>
        <begin position="897"/>
        <end position="910"/>
    </location>
</feature>
<feature type="disulfide bond" evidence="1">
    <location>
        <begin position="899"/>
        <end position="917"/>
    </location>
</feature>
<feature type="disulfide bond" evidence="1">
    <location>
        <begin position="919"/>
        <end position="928"/>
    </location>
</feature>
<feature type="disulfide bond" evidence="1">
    <location>
        <begin position="931"/>
        <end position="945"/>
    </location>
</feature>
<feature type="disulfide bond" evidence="1">
    <location>
        <begin position="948"/>
        <end position="960"/>
    </location>
</feature>
<feature type="disulfide bond" evidence="1">
    <location>
        <begin position="950"/>
        <end position="967"/>
    </location>
</feature>
<feature type="disulfide bond" evidence="1">
    <location>
        <begin position="969"/>
        <end position="979"/>
    </location>
</feature>
<feature type="disulfide bond" evidence="1">
    <location>
        <begin position="982"/>
        <end position="996"/>
    </location>
</feature>
<feature type="disulfide bond" evidence="1">
    <location>
        <begin position="999"/>
        <end position="1011"/>
    </location>
</feature>
<feature type="disulfide bond" evidence="1">
    <location>
        <begin position="1001"/>
        <end position="1018"/>
    </location>
</feature>
<feature type="disulfide bond" evidence="1">
    <location>
        <begin position="1020"/>
        <end position="1029"/>
    </location>
</feature>
<feature type="disulfide bond" evidence="1">
    <location>
        <begin position="1032"/>
        <end position="1047"/>
    </location>
</feature>
<feature type="disulfide bond" evidence="1">
    <location>
        <begin position="1663"/>
        <end position="1700"/>
    </location>
</feature>
<feature type="disulfide bond" evidence="1">
    <location>
        <begin position="1853"/>
        <end position="1882"/>
    </location>
</feature>
<feature type="splice variant" id="VSP_017774" description="In isoform 2." evidence="17">
    <original>AP</original>
    <variation>GK</variation>
    <location>
        <begin position="1460"/>
        <end position="1461"/>
    </location>
</feature>
<feature type="splice variant" id="VSP_017775" description="In isoform 2." evidence="17">
    <location>
        <begin position="1462"/>
        <end position="5193"/>
    </location>
</feature>
<feature type="splice variant" id="VSP_017776" description="In isoform 3." evidence="18">
    <original>V</original>
    <variation>VFDSVADISDVSSNVTLKSYTMHFE</variation>
    <location>
        <position position="5090"/>
    </location>
</feature>
<feature type="sequence conflict" description="In Ref. 1; AAF70550 and 2; AAZ23164." evidence="18" ref="1 2">
    <original>C</original>
    <variation>R</variation>
    <location>
        <position position="78"/>
    </location>
</feature>
<feature type="sequence conflict" description="In Ref. 1; AAF70550 and 2; AAZ23164." evidence="18" ref="1 2">
    <original>E</original>
    <variation>D</variation>
    <location>
        <position position="178"/>
    </location>
</feature>
<feature type="sequence conflict" description="In Ref. 1; AAF70550 and 2; AAZ23164." evidence="18" ref="1 2">
    <original>K</original>
    <variation>R</variation>
    <location>
        <position position="206"/>
    </location>
</feature>
<feature type="sequence conflict" description="In Ref. 1; AAF70550 and 2; AAZ23164." evidence="18" ref="1 2">
    <original>P</original>
    <variation>S</variation>
    <location>
        <position position="624"/>
    </location>
</feature>
<evidence type="ECO:0000250" key="1"/>
<evidence type="ECO:0000250" key="2">
    <source>
        <dbReference type="UniProtKB" id="O75445"/>
    </source>
</evidence>
<evidence type="ECO:0000255" key="3"/>
<evidence type="ECO:0000255" key="4">
    <source>
        <dbReference type="PROSITE-ProRule" id="PRU00122"/>
    </source>
</evidence>
<evidence type="ECO:0000255" key="5">
    <source>
        <dbReference type="PROSITE-ProRule" id="PRU00316"/>
    </source>
</evidence>
<evidence type="ECO:0000255" key="6">
    <source>
        <dbReference type="PROSITE-ProRule" id="PRU00460"/>
    </source>
</evidence>
<evidence type="ECO:0000255" key="7">
    <source>
        <dbReference type="PROSITE-ProRule" id="PRU00466"/>
    </source>
</evidence>
<evidence type="ECO:0000256" key="8">
    <source>
        <dbReference type="SAM" id="MobiDB-lite"/>
    </source>
</evidence>
<evidence type="ECO:0000269" key="9">
    <source>
    </source>
</evidence>
<evidence type="ECO:0000269" key="10">
    <source>
    </source>
</evidence>
<evidence type="ECO:0000269" key="11">
    <source>
    </source>
</evidence>
<evidence type="ECO:0000269" key="12">
    <source>
    </source>
</evidence>
<evidence type="ECO:0000269" key="13">
    <source>
    </source>
</evidence>
<evidence type="ECO:0000269" key="14">
    <source>
    </source>
</evidence>
<evidence type="ECO:0000269" key="15">
    <source>
    </source>
</evidence>
<evidence type="ECO:0000269" key="16">
    <source>
    </source>
</evidence>
<evidence type="ECO:0000303" key="17">
    <source>
    </source>
</evidence>
<evidence type="ECO:0000305" key="18"/>
<name>USH2A_MOUSE</name>
<reference key="1">
    <citation type="journal article" date="2002" name="Genomics">
        <title>Identification of the mouse and rat orthologs of the gene mutated in Usher syndrome type IIA and the cellular source of USH2A mRNA in retina, a target tissue of the disease.</title>
        <authorList>
            <person name="Huang D."/>
            <person name="Eudy J.D."/>
            <person name="Uzvolgyi E."/>
            <person name="Davis J.R."/>
            <person name="Talmadge C.B."/>
            <person name="Pretto D."/>
            <person name="Weston M.D."/>
            <person name="Lehman J.E."/>
            <person name="Zhou M."/>
            <person name="Seemayer T.A."/>
            <person name="Ahmad I."/>
            <person name="Kimberling W.J."/>
            <person name="Sumegi J."/>
        </authorList>
    </citation>
    <scope>NUCLEOTIDE SEQUENCE [MRNA] (ISOFORM 2)</scope>
</reference>
<reference key="2">
    <citation type="submission" date="2005-05" db="EMBL/GenBank/DDBJ databases">
        <title>Biochemical and genetic analyses of murine usherin (Ush2A).</title>
        <authorList>
            <person name="Liu X."/>
            <person name="Bulgakov O.V."/>
            <person name="Li T."/>
        </authorList>
    </citation>
    <scope>NUCLEOTIDE SEQUENCE [MRNA] (ISOFORM 1)</scope>
</reference>
<reference key="3">
    <citation type="journal article" date="2009" name="PLoS Biol.">
        <title>Lineage-specific biology revealed by a finished genome assembly of the mouse.</title>
        <authorList>
            <person name="Church D.M."/>
            <person name="Goodstadt L."/>
            <person name="Hillier L.W."/>
            <person name="Zody M.C."/>
            <person name="Goldstein S."/>
            <person name="She X."/>
            <person name="Bult C.J."/>
            <person name="Agarwala R."/>
            <person name="Cherry J.L."/>
            <person name="DiCuccio M."/>
            <person name="Hlavina W."/>
            <person name="Kapustin Y."/>
            <person name="Meric P."/>
            <person name="Maglott D."/>
            <person name="Birtle Z."/>
            <person name="Marques A.C."/>
            <person name="Graves T."/>
            <person name="Zhou S."/>
            <person name="Teague B."/>
            <person name="Potamousis K."/>
            <person name="Churas C."/>
            <person name="Place M."/>
            <person name="Herschleb J."/>
            <person name="Runnheim R."/>
            <person name="Forrest D."/>
            <person name="Amos-Landgraf J."/>
            <person name="Schwartz D.C."/>
            <person name="Cheng Z."/>
            <person name="Lindblad-Toh K."/>
            <person name="Eichler E.E."/>
            <person name="Ponting C.P."/>
        </authorList>
    </citation>
    <scope>NUCLEOTIDE SEQUENCE [LARGE SCALE GENOMIC DNA]</scope>
    <source>
        <strain>C57BL/6J</strain>
    </source>
</reference>
<reference key="4">
    <citation type="journal article" date="2002" name="Hear. Res.">
        <title>Localization and expression of usherin: a novel basement membrane protein defective in people with Usher's syndrome type IIa.</title>
        <authorList>
            <person name="Bhattacharya G."/>
            <person name="Miller C."/>
            <person name="Kimberling W.J."/>
            <person name="Jablonski M.M."/>
            <person name="Cosgrove D."/>
        </authorList>
    </citation>
    <scope>TISSUE SPECIFICITY</scope>
</reference>
<reference key="5">
    <citation type="journal article" date="2005" name="Hum. Mol. Genet.">
        <title>Usherin, the defective protein in Usher syndrome type IIA, is likely to be a component of interstereocilia ankle links in the inner ear sensory cells.</title>
        <authorList>
            <person name="Adato A."/>
            <person name="Lefevre G."/>
            <person name="Delprat B."/>
            <person name="Michel V."/>
            <person name="Michalski N."/>
            <person name="Chardenoux S."/>
            <person name="Weil D."/>
            <person name="El-Amraoui A."/>
            <person name="Petit C."/>
        </authorList>
    </citation>
    <scope>ALTERNATIVE SPLICING (ISOFORM 3)</scope>
    <scope>INTERACTION WITH USH1C AND WHRN</scope>
    <scope>SUBCELLULAR LOCATION</scope>
</reference>
<reference key="6">
    <citation type="journal article" date="2005" name="Hum. Mol. Genet.">
        <title>Scaffold protein harmonin (USH1C) provides molecular links between Usher syndrome type 1 and type 2.</title>
        <authorList>
            <person name="Reiners J."/>
            <person name="van Wijk E."/>
            <person name="Maerker T."/>
            <person name="Zimmermann U."/>
            <person name="Juergens K."/>
            <person name="te Brinke H."/>
            <person name="Overlack N."/>
            <person name="Roepman R."/>
            <person name="Knipper M."/>
            <person name="Kremer H."/>
            <person name="Wolfrum U."/>
        </authorList>
    </citation>
    <scope>TISSUE SPECIFICITY</scope>
</reference>
<reference key="7">
    <citation type="journal article" date="2007" name="J. Neurosci.">
        <title>Molecular characterization of the ankle-link complex in cochlear hair cells and its role in the hair bundle functioning.</title>
        <authorList>
            <person name="Michalski N."/>
            <person name="Michel V."/>
            <person name="Bahloul A."/>
            <person name="Lefevre G."/>
            <person name="Barral J."/>
            <person name="Yagi H."/>
            <person name="Chardenoux S."/>
            <person name="Weil D."/>
            <person name="Martin P."/>
            <person name="Hardelin J.P."/>
            <person name="Sato M."/>
            <person name="Petit C."/>
        </authorList>
    </citation>
    <scope>TISSUE SPECIFICITY</scope>
    <scope>SUBCELLULAR LOCATION</scope>
    <scope>INTERACTION WITH VEZT AND MYO7A</scope>
</reference>
<reference key="8">
    <citation type="journal article" date="2010" name="PLoS Genet.">
        <title>Ablation of whirlin long isoform disrupts the USH2 protein complex and causes vision and hearing loss.</title>
        <authorList>
            <person name="Yang J."/>
            <person name="Liu X."/>
            <person name="Zhao Y."/>
            <person name="Adamian M."/>
            <person name="Pawlyk B."/>
            <person name="Sun X."/>
            <person name="McMillan D.R."/>
            <person name="Liberman M.C."/>
            <person name="Li T."/>
        </authorList>
    </citation>
    <scope>FUNCTION</scope>
    <scope>SUBCELLULAR LOCATION</scope>
    <scope>TISSUE SPECIFICITY</scope>
    <scope>IDENTIFICATION IN THE USH2 COMPLEX</scope>
</reference>
<reference key="9">
    <citation type="journal article" date="2012" name="J. Neurosci.">
        <title>Localization of PDZD7 to the stereocilia ankle-link associates this scaffolding protein with the Usher syndrome protein network.</title>
        <authorList>
            <person name="Grati M."/>
            <person name="Shin J.B."/>
            <person name="Weston M.D."/>
            <person name="Green J."/>
            <person name="Bhat M.A."/>
            <person name="Gillespie P.G."/>
            <person name="Kachar B."/>
        </authorList>
    </citation>
    <scope>INTERACTION WITH PDZD7 AND WHRN</scope>
</reference>
<reference key="10">
    <citation type="journal article" date="2014" name="Hum. Mol. Genet.">
        <title>Deletion of PDZD7 disrupts the Usher syndrome type 2 protein complex in cochlear hair cells and causes hearing loss in mice.</title>
        <authorList>
            <person name="Zou J."/>
            <person name="Zheng T."/>
            <person name="Ren C."/>
            <person name="Askew C."/>
            <person name="Liu X.P."/>
            <person name="Pan B."/>
            <person name="Holt J.R."/>
            <person name="Wang Y."/>
            <person name="Yang J."/>
        </authorList>
    </citation>
    <scope>SUBCELLULAR LOCATION</scope>
    <source>
        <strain>C57BL/6J</strain>
        <tissue>Retina</tissue>
    </source>
</reference>
<reference key="11">
    <citation type="journal article" date="2014" name="J. Biol. Chem.">
        <title>Whirlin and PDZ domain-containing 7 (PDZD7) proteins are both required to form the quaternary protein complex associated with Usher syndrome type 2.</title>
        <authorList>
            <person name="Chen Q."/>
            <person name="Zou J."/>
            <person name="Shen Z."/>
            <person name="Zhang W."/>
            <person name="Yang J."/>
        </authorList>
    </citation>
    <scope>IDENTIFICATION IN THE USH2 COMPLEX</scope>
</reference>
<dbReference type="EMBL" id="AF151717">
    <property type="protein sequence ID" value="AAF70550.1"/>
    <property type="molecule type" value="mRNA"/>
</dbReference>
<dbReference type="EMBL" id="DQ073638">
    <property type="protein sequence ID" value="AAZ23164.1"/>
    <property type="molecule type" value="mRNA"/>
</dbReference>
<dbReference type="EMBL" id="AC121799">
    <property type="status" value="NOT_ANNOTATED_CDS"/>
    <property type="molecule type" value="Genomic_DNA"/>
</dbReference>
<dbReference type="EMBL" id="AC121892">
    <property type="status" value="NOT_ANNOTATED_CDS"/>
    <property type="molecule type" value="Genomic_DNA"/>
</dbReference>
<dbReference type="EMBL" id="AC122122">
    <property type="status" value="NOT_ANNOTATED_CDS"/>
    <property type="molecule type" value="Genomic_DNA"/>
</dbReference>
<dbReference type="EMBL" id="AC129312">
    <property type="status" value="NOT_ANNOTATED_CDS"/>
    <property type="molecule type" value="Genomic_DNA"/>
</dbReference>
<dbReference type="EMBL" id="AC135863">
    <property type="status" value="NOT_ANNOTATED_CDS"/>
    <property type="molecule type" value="Genomic_DNA"/>
</dbReference>
<dbReference type="EMBL" id="AC165230">
    <property type="status" value="NOT_ANNOTATED_CDS"/>
    <property type="molecule type" value="Genomic_DNA"/>
</dbReference>
<dbReference type="CCDS" id="CCDS15607.1">
    <molecule id="Q2QI47-1"/>
</dbReference>
<dbReference type="RefSeq" id="NP_067383.3">
    <molecule id="Q2QI47-1"/>
    <property type="nucleotide sequence ID" value="NM_021408.3"/>
</dbReference>
<dbReference type="SMR" id="Q2QI47"/>
<dbReference type="BioGRID" id="204466">
    <property type="interactions" value="4"/>
</dbReference>
<dbReference type="ComplexPortal" id="CPX-2501">
    <property type="entry name" value="USH2 complex"/>
</dbReference>
<dbReference type="CORUM" id="Q2QI47"/>
<dbReference type="FunCoup" id="Q2QI47">
    <property type="interactions" value="56"/>
</dbReference>
<dbReference type="STRING" id="10090.ENSMUSP00000050454"/>
<dbReference type="GlyCosmos" id="Q2QI47">
    <property type="glycosylation" value="68 sites, No reported glycans"/>
</dbReference>
<dbReference type="GlyGen" id="Q2QI47">
    <property type="glycosylation" value="73 sites, 3 N-linked glycans (4 sites)"/>
</dbReference>
<dbReference type="iPTMnet" id="Q2QI47"/>
<dbReference type="PhosphoSitePlus" id="Q2QI47"/>
<dbReference type="PaxDb" id="10090-ENSMUSP00000050454"/>
<dbReference type="ProteomicsDB" id="299651">
    <molecule id="Q2QI47-1"/>
</dbReference>
<dbReference type="ProteomicsDB" id="299653">
    <molecule id="Q2QI47-3"/>
</dbReference>
<dbReference type="Antibodypedia" id="53933">
    <property type="antibodies" value="74 antibodies from 12 providers"/>
</dbReference>
<dbReference type="Ensembl" id="ENSMUST00000060479.14">
    <molecule id="Q2QI47-1"/>
    <property type="protein sequence ID" value="ENSMUSP00000050454.8"/>
    <property type="gene ID" value="ENSMUSG00000026609.16"/>
</dbReference>
<dbReference type="GeneID" id="22283"/>
<dbReference type="KEGG" id="mmu:22283"/>
<dbReference type="UCSC" id="uc007eae.1">
    <molecule id="Q2QI47-2"/>
    <property type="organism name" value="mouse"/>
</dbReference>
<dbReference type="UCSC" id="uc007eaf.1">
    <molecule id="Q2QI47-1"/>
    <property type="organism name" value="mouse"/>
</dbReference>
<dbReference type="AGR" id="MGI:1341292"/>
<dbReference type="CTD" id="7399"/>
<dbReference type="MGI" id="MGI:1341292">
    <property type="gene designation" value="Ush2a"/>
</dbReference>
<dbReference type="VEuPathDB" id="HostDB:ENSMUSG00000026609"/>
<dbReference type="eggNOG" id="KOG1836">
    <property type="taxonomic scope" value="Eukaryota"/>
</dbReference>
<dbReference type="GeneTree" id="ENSGT00940000158456"/>
<dbReference type="HOGENOM" id="CLU_000067_0_0_1"/>
<dbReference type="InParanoid" id="Q2QI47"/>
<dbReference type="OMA" id="LYMDGML"/>
<dbReference type="OrthoDB" id="5984158at2759"/>
<dbReference type="PhylomeDB" id="Q2QI47"/>
<dbReference type="TreeFam" id="TF330287"/>
<dbReference type="BioGRID-ORCS" id="22283">
    <property type="hits" value="0 hits in 76 CRISPR screens"/>
</dbReference>
<dbReference type="ChiTaRS" id="Ush2a">
    <property type="organism name" value="mouse"/>
</dbReference>
<dbReference type="PRO" id="PR:Q2QI47"/>
<dbReference type="Proteomes" id="UP000000589">
    <property type="component" value="Chromosome 1"/>
</dbReference>
<dbReference type="RNAct" id="Q2QI47">
    <property type="molecule type" value="protein"/>
</dbReference>
<dbReference type="Bgee" id="ENSMUSG00000026609">
    <property type="expression patterns" value="Expressed in retinal neural layer and 24 other cell types or tissues"/>
</dbReference>
<dbReference type="ExpressionAtlas" id="Q2QI47">
    <property type="expression patterns" value="baseline and differential"/>
</dbReference>
<dbReference type="GO" id="GO:0016324">
    <property type="term" value="C:apical plasma membrane"/>
    <property type="evidence" value="ECO:0000314"/>
    <property type="project" value="MGI"/>
</dbReference>
<dbReference type="GO" id="GO:0005604">
    <property type="term" value="C:basement membrane"/>
    <property type="evidence" value="ECO:0000314"/>
    <property type="project" value="MGI"/>
</dbReference>
<dbReference type="GO" id="GO:0036064">
    <property type="term" value="C:ciliary basal body"/>
    <property type="evidence" value="ECO:0000314"/>
    <property type="project" value="MGI"/>
</dbReference>
<dbReference type="GO" id="GO:0005737">
    <property type="term" value="C:cytoplasm"/>
    <property type="evidence" value="ECO:0007669"/>
    <property type="project" value="Ensembl"/>
</dbReference>
<dbReference type="GO" id="GO:0005576">
    <property type="term" value="C:extracellular region"/>
    <property type="evidence" value="ECO:0007669"/>
    <property type="project" value="UniProtKB-SubCell"/>
</dbReference>
<dbReference type="GO" id="GO:1990075">
    <property type="term" value="C:periciliary membrane compartment"/>
    <property type="evidence" value="ECO:0000314"/>
    <property type="project" value="UniProtKB"/>
</dbReference>
<dbReference type="GO" id="GO:0032391">
    <property type="term" value="C:photoreceptor connecting cilium"/>
    <property type="evidence" value="ECO:0000314"/>
    <property type="project" value="MGI"/>
</dbReference>
<dbReference type="GO" id="GO:0001917">
    <property type="term" value="C:photoreceptor inner segment"/>
    <property type="evidence" value="ECO:0000314"/>
    <property type="project" value="MGI"/>
</dbReference>
<dbReference type="GO" id="GO:0002141">
    <property type="term" value="C:stereocilia ankle link"/>
    <property type="evidence" value="ECO:0000314"/>
    <property type="project" value="UniProtKB"/>
</dbReference>
<dbReference type="GO" id="GO:0002142">
    <property type="term" value="C:stereocilia ankle link complex"/>
    <property type="evidence" value="ECO:0000314"/>
    <property type="project" value="MGI"/>
</dbReference>
<dbReference type="GO" id="GO:0032420">
    <property type="term" value="C:stereocilium"/>
    <property type="evidence" value="ECO:0000314"/>
    <property type="project" value="MGI"/>
</dbReference>
<dbReference type="GO" id="GO:0032421">
    <property type="term" value="C:stereocilium bundle"/>
    <property type="evidence" value="ECO:0000314"/>
    <property type="project" value="MGI"/>
</dbReference>
<dbReference type="GO" id="GO:0060171">
    <property type="term" value="C:stereocilium membrane"/>
    <property type="evidence" value="ECO:0000314"/>
    <property type="project" value="BHF-UCL"/>
</dbReference>
<dbReference type="GO" id="GO:1990696">
    <property type="term" value="C:USH2 complex"/>
    <property type="evidence" value="ECO:0000314"/>
    <property type="project" value="UniProtKB"/>
</dbReference>
<dbReference type="GO" id="GO:0005518">
    <property type="term" value="F:collagen binding"/>
    <property type="evidence" value="ECO:0000314"/>
    <property type="project" value="MGI"/>
</dbReference>
<dbReference type="GO" id="GO:0042802">
    <property type="term" value="F:identical protein binding"/>
    <property type="evidence" value="ECO:0000353"/>
    <property type="project" value="MGI"/>
</dbReference>
<dbReference type="GO" id="GO:0017022">
    <property type="term" value="F:myosin binding"/>
    <property type="evidence" value="ECO:0000353"/>
    <property type="project" value="MGI"/>
</dbReference>
<dbReference type="GO" id="GO:0051649">
    <property type="term" value="P:establishment of localization in cell"/>
    <property type="evidence" value="ECO:0000315"/>
    <property type="project" value="MGI"/>
</dbReference>
<dbReference type="GO" id="GO:0045184">
    <property type="term" value="P:establishment of protein localization"/>
    <property type="evidence" value="ECO:0000315"/>
    <property type="project" value="MGI"/>
</dbReference>
<dbReference type="GO" id="GO:0035315">
    <property type="term" value="P:hair cell differentiation"/>
    <property type="evidence" value="ECO:0000270"/>
    <property type="project" value="BHF-UCL"/>
</dbReference>
<dbReference type="GO" id="GO:0042491">
    <property type="term" value="P:inner ear auditory receptor cell differentiation"/>
    <property type="evidence" value="ECO:0000315"/>
    <property type="project" value="MGI"/>
</dbReference>
<dbReference type="GO" id="GO:0060113">
    <property type="term" value="P:inner ear receptor cell differentiation"/>
    <property type="evidence" value="ECO:0000303"/>
    <property type="project" value="ComplexPortal"/>
</dbReference>
<dbReference type="GO" id="GO:0048496">
    <property type="term" value="P:maintenance of animal organ identity"/>
    <property type="evidence" value="ECO:0007669"/>
    <property type="project" value="Ensembl"/>
</dbReference>
<dbReference type="GO" id="GO:0045494">
    <property type="term" value="P:photoreceptor cell maintenance"/>
    <property type="evidence" value="ECO:0000315"/>
    <property type="project" value="MGI"/>
</dbReference>
<dbReference type="GO" id="GO:0007605">
    <property type="term" value="P:sensory perception of sound"/>
    <property type="evidence" value="ECO:0007669"/>
    <property type="project" value="UniProtKB-KW"/>
</dbReference>
<dbReference type="GO" id="GO:0007601">
    <property type="term" value="P:visual perception"/>
    <property type="evidence" value="ECO:0007669"/>
    <property type="project" value="UniProtKB-KW"/>
</dbReference>
<dbReference type="CDD" id="cd00055">
    <property type="entry name" value="EGF_Lam"/>
    <property type="match status" value="10"/>
</dbReference>
<dbReference type="CDD" id="cd00063">
    <property type="entry name" value="FN3"/>
    <property type="match status" value="28"/>
</dbReference>
<dbReference type="CDD" id="cd00110">
    <property type="entry name" value="LamG"/>
    <property type="match status" value="2"/>
</dbReference>
<dbReference type="FunFam" id="2.60.40.10:FF:003858">
    <property type="match status" value="1"/>
</dbReference>
<dbReference type="FunFam" id="2.10.25.10:FF:000090">
    <property type="entry name" value="laminin subunit alpha"/>
    <property type="match status" value="3"/>
</dbReference>
<dbReference type="FunFam" id="2.10.25.10:FF:000094">
    <property type="entry name" value="Laminin subunit alpha-2"/>
    <property type="match status" value="1"/>
</dbReference>
<dbReference type="FunFam" id="2.60.40.10:FF:002683">
    <property type="entry name" value="Predicted protein"/>
    <property type="match status" value="1"/>
</dbReference>
<dbReference type="FunFam" id="2.10.25.10:FF:000224">
    <property type="entry name" value="Usherin"/>
    <property type="match status" value="1"/>
</dbReference>
<dbReference type="FunFam" id="2.10.25.10:FF:000313">
    <property type="entry name" value="Usherin"/>
    <property type="match status" value="1"/>
</dbReference>
<dbReference type="FunFam" id="2.10.25.10:FF:000412">
    <property type="entry name" value="Usherin"/>
    <property type="match status" value="1"/>
</dbReference>
<dbReference type="FunFam" id="2.60.120.200:FF:000111">
    <property type="entry name" value="Usherin"/>
    <property type="match status" value="1"/>
</dbReference>
<dbReference type="FunFam" id="2.60.120.200:FF:000125">
    <property type="entry name" value="Usherin"/>
    <property type="match status" value="1"/>
</dbReference>
<dbReference type="FunFam" id="2.60.120.260:FF:000069">
    <property type="entry name" value="Usherin"/>
    <property type="match status" value="1"/>
</dbReference>
<dbReference type="FunFam" id="2.60.40.10:FF:000819">
    <property type="entry name" value="Usherin"/>
    <property type="match status" value="1"/>
</dbReference>
<dbReference type="FunFam" id="2.60.40.10:FF:000915">
    <property type="entry name" value="Usherin"/>
    <property type="match status" value="1"/>
</dbReference>
<dbReference type="FunFam" id="2.60.40.10:FF:000991">
    <property type="entry name" value="Usherin"/>
    <property type="match status" value="1"/>
</dbReference>
<dbReference type="FunFam" id="2.60.40.10:FF:001004">
    <property type="entry name" value="Usherin"/>
    <property type="match status" value="1"/>
</dbReference>
<dbReference type="FunFam" id="2.60.40.10:FF:001030">
    <property type="entry name" value="Usherin"/>
    <property type="match status" value="1"/>
</dbReference>
<dbReference type="FunFam" id="2.60.40.10:FF:001037">
    <property type="entry name" value="Usherin"/>
    <property type="match status" value="1"/>
</dbReference>
<dbReference type="FunFam" id="2.60.40.10:FF:001052">
    <property type="entry name" value="Usherin"/>
    <property type="match status" value="1"/>
</dbReference>
<dbReference type="FunFam" id="2.60.40.10:FF:001085">
    <property type="entry name" value="Usherin"/>
    <property type="match status" value="1"/>
</dbReference>
<dbReference type="FunFam" id="2.60.40.10:FF:001099">
    <property type="entry name" value="Usherin"/>
    <property type="match status" value="1"/>
</dbReference>
<dbReference type="FunFam" id="2.60.40.10:FF:001100">
    <property type="entry name" value="Usherin"/>
    <property type="match status" value="1"/>
</dbReference>
<dbReference type="FunFam" id="2.60.40.10:FF:001161">
    <property type="entry name" value="Usherin"/>
    <property type="match status" value="1"/>
</dbReference>
<dbReference type="FunFam" id="2.60.40.10:FF:001168">
    <property type="entry name" value="Usherin"/>
    <property type="match status" value="1"/>
</dbReference>
<dbReference type="FunFam" id="2.60.40.10:FF:001173">
    <property type="entry name" value="Usherin"/>
    <property type="match status" value="1"/>
</dbReference>
<dbReference type="FunFam" id="2.60.40.10:FF:001176">
    <property type="entry name" value="Usherin"/>
    <property type="match status" value="1"/>
</dbReference>
<dbReference type="FunFam" id="2.60.40.10:FF:001211">
    <property type="entry name" value="Usherin"/>
    <property type="match status" value="1"/>
</dbReference>
<dbReference type="FunFam" id="2.60.40.10:FF:001227">
    <property type="entry name" value="Usherin"/>
    <property type="match status" value="1"/>
</dbReference>
<dbReference type="FunFam" id="2.60.40.10:FF:001276">
    <property type="entry name" value="Usherin"/>
    <property type="match status" value="1"/>
</dbReference>
<dbReference type="FunFam" id="2.60.40.10:FF:001285">
    <property type="entry name" value="Usherin"/>
    <property type="match status" value="1"/>
</dbReference>
<dbReference type="FunFam" id="2.60.40.10:FF:001296">
    <property type="entry name" value="Usherin"/>
    <property type="match status" value="1"/>
</dbReference>
<dbReference type="FunFam" id="2.60.40.10:FF:001379">
    <property type="entry name" value="Usherin"/>
    <property type="match status" value="1"/>
</dbReference>
<dbReference type="FunFam" id="2.60.40.10:FF:001390">
    <property type="entry name" value="Usherin"/>
    <property type="match status" value="1"/>
</dbReference>
<dbReference type="FunFam" id="2.60.40.10:FF:001416">
    <property type="entry name" value="Usherin"/>
    <property type="match status" value="1"/>
</dbReference>
<dbReference type="FunFam" id="2.60.40.10:FF:001716">
    <property type="entry name" value="Usherin"/>
    <property type="match status" value="1"/>
</dbReference>
<dbReference type="FunFam" id="2.60.40.10:FF:001882">
    <property type="entry name" value="Usherin"/>
    <property type="match status" value="1"/>
</dbReference>
<dbReference type="FunFam" id="2.60.40.10:FF:001945">
    <property type="entry name" value="Usherin"/>
    <property type="match status" value="1"/>
</dbReference>
<dbReference type="FunFam" id="2.10.25.10:FF:000275">
    <property type="entry name" value="usherin"/>
    <property type="match status" value="1"/>
</dbReference>
<dbReference type="FunFam" id="2.10.25.10:FF:000330">
    <property type="entry name" value="usherin"/>
    <property type="match status" value="1"/>
</dbReference>
<dbReference type="FunFam" id="2.60.120.200:FF:000126">
    <property type="entry name" value="usherin"/>
    <property type="match status" value="1"/>
</dbReference>
<dbReference type="FunFam" id="2.60.40.10:FF:001023">
    <property type="entry name" value="usherin"/>
    <property type="match status" value="1"/>
</dbReference>
<dbReference type="FunFam" id="2.60.40.10:FF:001255">
    <property type="entry name" value="usherin"/>
    <property type="match status" value="1"/>
</dbReference>
<dbReference type="Gene3D" id="2.60.120.200">
    <property type="match status" value="3"/>
</dbReference>
<dbReference type="Gene3D" id="2.60.120.260">
    <property type="entry name" value="Galactose-binding domain-like"/>
    <property type="match status" value="1"/>
</dbReference>
<dbReference type="Gene3D" id="2.60.40.10">
    <property type="entry name" value="Immunoglobulins"/>
    <property type="match status" value="32"/>
</dbReference>
<dbReference type="Gene3D" id="2.10.25.10">
    <property type="entry name" value="Laminin"/>
    <property type="match status" value="9"/>
</dbReference>
<dbReference type="InterPro" id="IPR013320">
    <property type="entry name" value="ConA-like_dom_sf"/>
</dbReference>
<dbReference type="InterPro" id="IPR003961">
    <property type="entry name" value="FN3_dom"/>
</dbReference>
<dbReference type="InterPro" id="IPR036116">
    <property type="entry name" value="FN3_sf"/>
</dbReference>
<dbReference type="InterPro" id="IPR013783">
    <property type="entry name" value="Ig-like_fold"/>
</dbReference>
<dbReference type="InterPro" id="IPR006558">
    <property type="entry name" value="LamG-like"/>
</dbReference>
<dbReference type="InterPro" id="IPR001791">
    <property type="entry name" value="Laminin_G"/>
</dbReference>
<dbReference type="InterPro" id="IPR008211">
    <property type="entry name" value="Laminin_N"/>
</dbReference>
<dbReference type="InterPro" id="IPR002049">
    <property type="entry name" value="LE_dom"/>
</dbReference>
<dbReference type="InterPro" id="IPR050713">
    <property type="entry name" value="RTP_Phos/Ushers"/>
</dbReference>
<dbReference type="PANTHER" id="PTHR46957">
    <property type="entry name" value="CYTOKINE RECEPTOR"/>
    <property type="match status" value="1"/>
</dbReference>
<dbReference type="PANTHER" id="PTHR46957:SF7">
    <property type="entry name" value="USHERIN"/>
    <property type="match status" value="1"/>
</dbReference>
<dbReference type="Pfam" id="PF00053">
    <property type="entry name" value="EGF_laminin"/>
    <property type="match status" value="10"/>
</dbReference>
<dbReference type="Pfam" id="PF00041">
    <property type="entry name" value="fn3"/>
    <property type="match status" value="15"/>
</dbReference>
<dbReference type="Pfam" id="PF02210">
    <property type="entry name" value="Laminin_G_2"/>
    <property type="match status" value="2"/>
</dbReference>
<dbReference type="Pfam" id="PF13385">
    <property type="entry name" value="Laminin_G_3"/>
    <property type="match status" value="1"/>
</dbReference>
<dbReference type="Pfam" id="PF00055">
    <property type="entry name" value="Laminin_N"/>
    <property type="match status" value="1"/>
</dbReference>
<dbReference type="PRINTS" id="PR00011">
    <property type="entry name" value="EGFLAMININ"/>
</dbReference>
<dbReference type="SMART" id="SM00180">
    <property type="entry name" value="EGF_Lam"/>
    <property type="match status" value="10"/>
</dbReference>
<dbReference type="SMART" id="SM00060">
    <property type="entry name" value="FN3"/>
    <property type="match status" value="34"/>
</dbReference>
<dbReference type="SMART" id="SM00282">
    <property type="entry name" value="LamG"/>
    <property type="match status" value="2"/>
</dbReference>
<dbReference type="SMART" id="SM00560">
    <property type="entry name" value="LamGL"/>
    <property type="match status" value="1"/>
</dbReference>
<dbReference type="SMART" id="SM00136">
    <property type="entry name" value="LamNT"/>
    <property type="match status" value="1"/>
</dbReference>
<dbReference type="SUPFAM" id="SSF49899">
    <property type="entry name" value="Concanavalin A-like lectins/glucanases"/>
    <property type="match status" value="3"/>
</dbReference>
<dbReference type="SUPFAM" id="SSF57196">
    <property type="entry name" value="EGF/Laminin"/>
    <property type="match status" value="8"/>
</dbReference>
<dbReference type="SUPFAM" id="SSF49265">
    <property type="entry name" value="Fibronectin type III"/>
    <property type="match status" value="21"/>
</dbReference>
<dbReference type="PROSITE" id="PS00022">
    <property type="entry name" value="EGF_1"/>
    <property type="match status" value="7"/>
</dbReference>
<dbReference type="PROSITE" id="PS01248">
    <property type="entry name" value="EGF_LAM_1"/>
    <property type="match status" value="7"/>
</dbReference>
<dbReference type="PROSITE" id="PS50027">
    <property type="entry name" value="EGF_LAM_2"/>
    <property type="match status" value="10"/>
</dbReference>
<dbReference type="PROSITE" id="PS50853">
    <property type="entry name" value="FN3"/>
    <property type="match status" value="34"/>
</dbReference>
<dbReference type="PROSITE" id="PS50025">
    <property type="entry name" value="LAM_G_DOMAIN"/>
    <property type="match status" value="2"/>
</dbReference>
<dbReference type="PROSITE" id="PS51117">
    <property type="entry name" value="LAMININ_NTER"/>
    <property type="match status" value="1"/>
</dbReference>
<keyword id="KW-0025">Alternative splicing</keyword>
<keyword id="KW-1003">Cell membrane</keyword>
<keyword id="KW-0966">Cell projection</keyword>
<keyword id="KW-1015">Disulfide bond</keyword>
<keyword id="KW-0325">Glycoprotein</keyword>
<keyword id="KW-1009">Hearing</keyword>
<keyword id="KW-0424">Laminin EGF-like domain</keyword>
<keyword id="KW-0472">Membrane</keyword>
<keyword id="KW-1185">Reference proteome</keyword>
<keyword id="KW-0677">Repeat</keyword>
<keyword id="KW-0964">Secreted</keyword>
<keyword id="KW-0716">Sensory transduction</keyword>
<keyword id="KW-0732">Signal</keyword>
<keyword id="KW-0812">Transmembrane</keyword>
<keyword id="KW-1133">Transmembrane helix</keyword>
<keyword id="KW-0844">Vision</keyword>
<accession>Q2QI47</accession>
<accession>E9QLJ9</accession>
<accession>Q9JLP3</accession>
<protein>
    <recommendedName>
        <fullName>Usherin</fullName>
    </recommendedName>
    <alternativeName>
        <fullName>Usher syndrome type IIa protein homolog</fullName>
    </alternativeName>
    <alternativeName>
        <fullName>Usher syndrome type-2A protein homolog</fullName>
    </alternativeName>
</protein>
<gene>
    <name type="primary">Ush2A</name>
    <name type="synonym">Gm676</name>
</gene>
<comment type="function">
    <text evidence="13 15">Involved in hearing and vision as member of the USH2 complex (PubMed:20502675). In the inner ear, required for the maintenance of hair bundle ankle formation, which connects growing stereocilia in developing cochlear hair cells (PubMed:20502675, PubMed:24334608). In retina photoreceptors, the USH2 complex is required for the maintenance of periciliary membrane complex that seems to play a role in regulating intracellular protein transport (PubMed:20502675).</text>
</comment>
<comment type="subunit">
    <text evidence="2 11 12 13 14 16">Interacts with collagen IV and fibronectin via its laminin EGF-like domains. Interaction with collagen may be required for stable integration into the basement membrane. Interacts with NINL (By similarity). Interacts with USH1C (PubMed:16301217). Component of USH2 complex, composed of ADGRV1, PDZD7, USH2A and WHRN (PubMed:20502675, PubMed:25406310). Interacts with ADGRV1/MASS1 (via N-terminal PDZ domain) (PubMed:20502675). Interacts (via the cytoplasmic region) with WHRN (PubMed:16301217, PubMed:20502675, PubMed:23055499). Interacts (via the cytoplasmic region) with PDZD7 (PubMed:23055499). Interacts (via the cytoplasmic region) with VEZT and MYO7A (via MyTH4-FERM domains); the interaction associates VEZT with the USH2 complex at the stereocilia base (PubMed:17567809).</text>
</comment>
<comment type="subcellular location">
    <subcellularLocation>
        <location evidence="12 13 15">Cell projection</location>
        <location evidence="12 13 15">Stereocilium membrane</location>
        <topology>Single-pass type I membrane protein</topology>
    </subcellularLocation>
    <subcellularLocation>
        <location evidence="13 15">Photoreceptor inner segment</location>
    </subcellularLocation>
    <text evidence="13 15">Component of the interstereocilia ankle links in the inner ear sensory cells (PubMed:20502675, PubMed:24334608). In photoreceptors, localizes at a plasma membrane microdomain in the apical inner segment that surrounds the connecting cilia called periciliary membrane complex (PubMed:20502675, PubMed:24334608).</text>
</comment>
<comment type="subcellular location">
    <molecule>Isoform 2</molecule>
    <subcellularLocation>
        <location>Secreted</location>
    </subcellularLocation>
</comment>
<comment type="alternative products">
    <event type="alternative splicing"/>
    <isoform>
        <id>Q2QI47-1</id>
        <name>1</name>
        <sequence type="displayed"/>
    </isoform>
    <isoform>
        <id>Q2QI47-2</id>
        <name>2</name>
        <sequence type="described" ref="VSP_017774 VSP_017775"/>
    </isoform>
    <isoform>
        <id>Q2QI47-3</id>
        <name>3</name>
        <sequence type="described" ref="VSP_017776"/>
    </isoform>
</comment>
<comment type="tissue specificity">
    <text evidence="9 10 12 13">Present in the testis, epididymis, oviduct, spleen, submaxillary gland, and small and large intestines. Not detected in the brain, skin, lung, skeletal muscle, cardiac muscle, liver or kidney. Expressed in smooth muscle of the colon and the epididymis. Also present in select vascular basement membranes. In the cochlea, it is present in virtually every basement membrane. It is particularly high in the strial capillary basement membranes (SCBMs). In the retina, it is again expressed in all of the basement membranes. It is also very prevalent in the lens capsule and the Bruch's layer between the retinal pigment epithelium and the choroid layer, which is very rich in basement membranes. In neonates in it is widely expressed in the basement membranes of the cochlea. Present in the synaptic terminals of retinal photoreceptors (at protein level).</text>
</comment>
<comment type="domain">
    <text evidence="13">The PDZ-binding motif mediates the association with some of the PDZ domains of USH1C and WHRN.</text>
</comment>
<organism>
    <name type="scientific">Mus musculus</name>
    <name type="common">Mouse</name>
    <dbReference type="NCBI Taxonomy" id="10090"/>
    <lineage>
        <taxon>Eukaryota</taxon>
        <taxon>Metazoa</taxon>
        <taxon>Chordata</taxon>
        <taxon>Craniata</taxon>
        <taxon>Vertebrata</taxon>
        <taxon>Euteleostomi</taxon>
        <taxon>Mammalia</taxon>
        <taxon>Eutheria</taxon>
        <taxon>Euarchontoglires</taxon>
        <taxon>Glires</taxon>
        <taxon>Rodentia</taxon>
        <taxon>Myomorpha</taxon>
        <taxon>Muroidea</taxon>
        <taxon>Muridae</taxon>
        <taxon>Murinae</taxon>
        <taxon>Mus</taxon>
        <taxon>Mus</taxon>
    </lineage>
</organism>